<protein>
    <recommendedName>
        <fullName evidence="1">CTP synthase</fullName>
        <ecNumber evidence="1">6.3.4.2</ecNumber>
    </recommendedName>
    <alternativeName>
        <fullName evidence="1">Cytidine 5'-triphosphate synthase</fullName>
    </alternativeName>
    <alternativeName>
        <fullName evidence="1">Cytidine triphosphate synthetase</fullName>
        <shortName evidence="1">CTP synthetase</shortName>
        <shortName evidence="1">CTPS</shortName>
    </alternativeName>
    <alternativeName>
        <fullName evidence="1">UTP--ammonia ligase</fullName>
    </alternativeName>
</protein>
<comment type="function">
    <text evidence="1">Catalyzes the ATP-dependent amination of UTP to CTP with either L-glutamine or ammonia as the source of nitrogen. Regulates intracellular CTP levels through interactions with the four ribonucleotide triphosphates.</text>
</comment>
<comment type="catalytic activity">
    <reaction evidence="1">
        <text>UTP + L-glutamine + ATP + H2O = CTP + L-glutamate + ADP + phosphate + 2 H(+)</text>
        <dbReference type="Rhea" id="RHEA:26426"/>
        <dbReference type="ChEBI" id="CHEBI:15377"/>
        <dbReference type="ChEBI" id="CHEBI:15378"/>
        <dbReference type="ChEBI" id="CHEBI:29985"/>
        <dbReference type="ChEBI" id="CHEBI:30616"/>
        <dbReference type="ChEBI" id="CHEBI:37563"/>
        <dbReference type="ChEBI" id="CHEBI:43474"/>
        <dbReference type="ChEBI" id="CHEBI:46398"/>
        <dbReference type="ChEBI" id="CHEBI:58359"/>
        <dbReference type="ChEBI" id="CHEBI:456216"/>
        <dbReference type="EC" id="6.3.4.2"/>
    </reaction>
</comment>
<comment type="catalytic activity">
    <reaction evidence="1">
        <text>L-glutamine + H2O = L-glutamate + NH4(+)</text>
        <dbReference type="Rhea" id="RHEA:15889"/>
        <dbReference type="ChEBI" id="CHEBI:15377"/>
        <dbReference type="ChEBI" id="CHEBI:28938"/>
        <dbReference type="ChEBI" id="CHEBI:29985"/>
        <dbReference type="ChEBI" id="CHEBI:58359"/>
    </reaction>
</comment>
<comment type="catalytic activity">
    <reaction evidence="1">
        <text>UTP + NH4(+) + ATP = CTP + ADP + phosphate + 2 H(+)</text>
        <dbReference type="Rhea" id="RHEA:16597"/>
        <dbReference type="ChEBI" id="CHEBI:15378"/>
        <dbReference type="ChEBI" id="CHEBI:28938"/>
        <dbReference type="ChEBI" id="CHEBI:30616"/>
        <dbReference type="ChEBI" id="CHEBI:37563"/>
        <dbReference type="ChEBI" id="CHEBI:43474"/>
        <dbReference type="ChEBI" id="CHEBI:46398"/>
        <dbReference type="ChEBI" id="CHEBI:456216"/>
    </reaction>
</comment>
<comment type="activity regulation">
    <text evidence="1">Allosterically activated by GTP, when glutamine is the substrate; GTP has no effect on the reaction when ammonia is the substrate. The allosteric effector GTP functions by stabilizing the protein conformation that binds the tetrahedral intermediate(s) formed during glutamine hydrolysis. Inhibited by the product CTP, via allosteric rather than competitive inhibition.</text>
</comment>
<comment type="pathway">
    <text evidence="1">Pyrimidine metabolism; CTP biosynthesis via de novo pathway; CTP from UDP: step 2/2.</text>
</comment>
<comment type="subunit">
    <text evidence="1">Homotetramer.</text>
</comment>
<comment type="miscellaneous">
    <text evidence="1">CTPSs have evolved a hybrid strategy for distinguishing between UTP and CTP. The overlapping regions of the product feedback inhibitory and substrate sites recognize a common feature in both compounds, the triphosphate moiety. To differentiate isosteric substrate and product pyrimidine rings, an additional pocket far from the expected kinase/ligase catalytic site, specifically recognizes the cytosine and ribose portions of the product inhibitor.</text>
</comment>
<comment type="similarity">
    <text evidence="1">Belongs to the CTP synthase family.</text>
</comment>
<gene>
    <name evidence="1" type="primary">pyrG</name>
    <name type="ordered locus">MJ1174</name>
</gene>
<evidence type="ECO:0000255" key="1">
    <source>
        <dbReference type="HAMAP-Rule" id="MF_01227"/>
    </source>
</evidence>
<accession>Q58574</accession>
<proteinExistence type="inferred from homology"/>
<reference key="1">
    <citation type="journal article" date="1996" name="Science">
        <title>Complete genome sequence of the methanogenic archaeon, Methanococcus jannaschii.</title>
        <authorList>
            <person name="Bult C.J."/>
            <person name="White O."/>
            <person name="Olsen G.J."/>
            <person name="Zhou L."/>
            <person name="Fleischmann R.D."/>
            <person name="Sutton G.G."/>
            <person name="Blake J.A."/>
            <person name="FitzGerald L.M."/>
            <person name="Clayton R.A."/>
            <person name="Gocayne J.D."/>
            <person name="Kerlavage A.R."/>
            <person name="Dougherty B.A."/>
            <person name="Tomb J.-F."/>
            <person name="Adams M.D."/>
            <person name="Reich C.I."/>
            <person name="Overbeek R."/>
            <person name="Kirkness E.F."/>
            <person name="Weinstock K.G."/>
            <person name="Merrick J.M."/>
            <person name="Glodek A."/>
            <person name="Scott J.L."/>
            <person name="Geoghagen N.S.M."/>
            <person name="Weidman J.F."/>
            <person name="Fuhrmann J.L."/>
            <person name="Nguyen D."/>
            <person name="Utterback T.R."/>
            <person name="Kelley J.M."/>
            <person name="Peterson J.D."/>
            <person name="Sadow P.W."/>
            <person name="Hanna M.C."/>
            <person name="Cotton M.D."/>
            <person name="Roberts K.M."/>
            <person name="Hurst M.A."/>
            <person name="Kaine B.P."/>
            <person name="Borodovsky M."/>
            <person name="Klenk H.-P."/>
            <person name="Fraser C.M."/>
            <person name="Smith H.O."/>
            <person name="Woese C.R."/>
            <person name="Venter J.C."/>
        </authorList>
    </citation>
    <scope>NUCLEOTIDE SEQUENCE [LARGE SCALE GENOMIC DNA]</scope>
    <source>
        <strain>ATCC 43067 / DSM 2661 / JAL-1 / JCM 10045 / NBRC 100440</strain>
    </source>
</reference>
<keyword id="KW-0067">ATP-binding</keyword>
<keyword id="KW-0315">Glutamine amidotransferase</keyword>
<keyword id="KW-0436">Ligase</keyword>
<keyword id="KW-0460">Magnesium</keyword>
<keyword id="KW-0479">Metal-binding</keyword>
<keyword id="KW-0547">Nucleotide-binding</keyword>
<keyword id="KW-0665">Pyrimidine biosynthesis</keyword>
<keyword id="KW-1185">Reference proteome</keyword>
<dbReference type="EC" id="6.3.4.2" evidence="1"/>
<dbReference type="EMBL" id="L77117">
    <property type="protein sequence ID" value="AAB99177.1"/>
    <property type="molecule type" value="Genomic_DNA"/>
</dbReference>
<dbReference type="PIR" id="E64446">
    <property type="entry name" value="E64446"/>
</dbReference>
<dbReference type="SMR" id="Q58574"/>
<dbReference type="FunCoup" id="Q58574">
    <property type="interactions" value="241"/>
</dbReference>
<dbReference type="STRING" id="243232.MJ_1174"/>
<dbReference type="PaxDb" id="243232-MJ_1174"/>
<dbReference type="EnsemblBacteria" id="AAB99177">
    <property type="protein sequence ID" value="AAB99177"/>
    <property type="gene ID" value="MJ_1174"/>
</dbReference>
<dbReference type="KEGG" id="mja:MJ_1174"/>
<dbReference type="eggNOG" id="arCOG00063">
    <property type="taxonomic scope" value="Archaea"/>
</dbReference>
<dbReference type="HOGENOM" id="CLU_011675_5_0_2"/>
<dbReference type="InParanoid" id="Q58574"/>
<dbReference type="PhylomeDB" id="Q58574"/>
<dbReference type="UniPathway" id="UPA00159">
    <property type="reaction ID" value="UER00277"/>
</dbReference>
<dbReference type="Proteomes" id="UP000000805">
    <property type="component" value="Chromosome"/>
</dbReference>
<dbReference type="GO" id="GO:0005829">
    <property type="term" value="C:cytosol"/>
    <property type="evidence" value="ECO:0000318"/>
    <property type="project" value="GO_Central"/>
</dbReference>
<dbReference type="GO" id="GO:0005524">
    <property type="term" value="F:ATP binding"/>
    <property type="evidence" value="ECO:0007669"/>
    <property type="project" value="UniProtKB-KW"/>
</dbReference>
<dbReference type="GO" id="GO:0003883">
    <property type="term" value="F:CTP synthase activity"/>
    <property type="evidence" value="ECO:0000318"/>
    <property type="project" value="GO_Central"/>
</dbReference>
<dbReference type="GO" id="GO:0004359">
    <property type="term" value="F:glutaminase activity"/>
    <property type="evidence" value="ECO:0007669"/>
    <property type="project" value="RHEA"/>
</dbReference>
<dbReference type="GO" id="GO:0042802">
    <property type="term" value="F:identical protein binding"/>
    <property type="evidence" value="ECO:0000318"/>
    <property type="project" value="GO_Central"/>
</dbReference>
<dbReference type="GO" id="GO:0046872">
    <property type="term" value="F:metal ion binding"/>
    <property type="evidence" value="ECO:0007669"/>
    <property type="project" value="UniProtKB-KW"/>
</dbReference>
<dbReference type="GO" id="GO:0044210">
    <property type="term" value="P:'de novo' CTP biosynthetic process"/>
    <property type="evidence" value="ECO:0007669"/>
    <property type="project" value="UniProtKB-UniRule"/>
</dbReference>
<dbReference type="GO" id="GO:0006241">
    <property type="term" value="P:CTP biosynthetic process"/>
    <property type="evidence" value="ECO:0000318"/>
    <property type="project" value="GO_Central"/>
</dbReference>
<dbReference type="GO" id="GO:0019856">
    <property type="term" value="P:pyrimidine nucleobase biosynthetic process"/>
    <property type="evidence" value="ECO:0000318"/>
    <property type="project" value="GO_Central"/>
</dbReference>
<dbReference type="CDD" id="cd03113">
    <property type="entry name" value="CTPS_N"/>
    <property type="match status" value="1"/>
</dbReference>
<dbReference type="CDD" id="cd01746">
    <property type="entry name" value="GATase1_CTP_Synthase"/>
    <property type="match status" value="1"/>
</dbReference>
<dbReference type="FunFam" id="3.40.50.300:FF:000009">
    <property type="entry name" value="CTP synthase"/>
    <property type="match status" value="1"/>
</dbReference>
<dbReference type="FunFam" id="3.40.50.880:FF:000002">
    <property type="entry name" value="CTP synthase"/>
    <property type="match status" value="1"/>
</dbReference>
<dbReference type="Gene3D" id="3.40.50.880">
    <property type="match status" value="1"/>
</dbReference>
<dbReference type="Gene3D" id="3.40.50.300">
    <property type="entry name" value="P-loop containing nucleotide triphosphate hydrolases"/>
    <property type="match status" value="1"/>
</dbReference>
<dbReference type="HAMAP" id="MF_01227">
    <property type="entry name" value="PyrG"/>
    <property type="match status" value="1"/>
</dbReference>
<dbReference type="InterPro" id="IPR029062">
    <property type="entry name" value="Class_I_gatase-like"/>
</dbReference>
<dbReference type="InterPro" id="IPR004468">
    <property type="entry name" value="CTP_synthase"/>
</dbReference>
<dbReference type="InterPro" id="IPR017456">
    <property type="entry name" value="CTP_synthase_N"/>
</dbReference>
<dbReference type="InterPro" id="IPR017926">
    <property type="entry name" value="GATASE"/>
</dbReference>
<dbReference type="InterPro" id="IPR033828">
    <property type="entry name" value="GATase1_CTP_Synthase"/>
</dbReference>
<dbReference type="InterPro" id="IPR027417">
    <property type="entry name" value="P-loop_NTPase"/>
</dbReference>
<dbReference type="NCBIfam" id="NF003792">
    <property type="entry name" value="PRK05380.1"/>
    <property type="match status" value="1"/>
</dbReference>
<dbReference type="NCBIfam" id="TIGR00337">
    <property type="entry name" value="PyrG"/>
    <property type="match status" value="1"/>
</dbReference>
<dbReference type="PANTHER" id="PTHR11550">
    <property type="entry name" value="CTP SYNTHASE"/>
    <property type="match status" value="1"/>
</dbReference>
<dbReference type="PANTHER" id="PTHR11550:SF0">
    <property type="entry name" value="CTP SYNTHASE-RELATED"/>
    <property type="match status" value="1"/>
</dbReference>
<dbReference type="Pfam" id="PF06418">
    <property type="entry name" value="CTP_synth_N"/>
    <property type="match status" value="1"/>
</dbReference>
<dbReference type="Pfam" id="PF00117">
    <property type="entry name" value="GATase"/>
    <property type="match status" value="1"/>
</dbReference>
<dbReference type="SUPFAM" id="SSF52317">
    <property type="entry name" value="Class I glutamine amidotransferase-like"/>
    <property type="match status" value="1"/>
</dbReference>
<dbReference type="SUPFAM" id="SSF52540">
    <property type="entry name" value="P-loop containing nucleoside triphosphate hydrolases"/>
    <property type="match status" value="1"/>
</dbReference>
<dbReference type="PROSITE" id="PS51273">
    <property type="entry name" value="GATASE_TYPE_1"/>
    <property type="match status" value="1"/>
</dbReference>
<feature type="chain" id="PRO_0000138260" description="CTP synthase">
    <location>
        <begin position="1"/>
        <end position="540"/>
    </location>
</feature>
<feature type="domain" description="Glutamine amidotransferase type-1" evidence="1">
    <location>
        <begin position="292"/>
        <end position="540"/>
    </location>
</feature>
<feature type="region of interest" description="Amidoligase domain" evidence="1">
    <location>
        <begin position="1"/>
        <end position="267"/>
    </location>
</feature>
<feature type="active site" description="Nucleophile; for glutamine hydrolysis" evidence="1">
    <location>
        <position position="387"/>
    </location>
</feature>
<feature type="active site" evidence="1">
    <location>
        <position position="513"/>
    </location>
</feature>
<feature type="active site" evidence="1">
    <location>
        <position position="515"/>
    </location>
</feature>
<feature type="binding site" evidence="1">
    <location>
        <position position="15"/>
    </location>
    <ligand>
        <name>CTP</name>
        <dbReference type="ChEBI" id="CHEBI:37563"/>
        <note>allosteric inhibitor</note>
    </ligand>
</feature>
<feature type="binding site" evidence="1">
    <location>
        <position position="15"/>
    </location>
    <ligand>
        <name>UTP</name>
        <dbReference type="ChEBI" id="CHEBI:46398"/>
    </ligand>
</feature>
<feature type="binding site" evidence="1">
    <location>
        <begin position="16"/>
        <end position="21"/>
    </location>
    <ligand>
        <name>ATP</name>
        <dbReference type="ChEBI" id="CHEBI:30616"/>
    </ligand>
</feature>
<feature type="binding site" evidence="1">
    <location>
        <position position="56"/>
    </location>
    <ligand>
        <name>L-glutamine</name>
        <dbReference type="ChEBI" id="CHEBI:58359"/>
    </ligand>
</feature>
<feature type="binding site" evidence="1">
    <location>
        <position position="73"/>
    </location>
    <ligand>
        <name>ATP</name>
        <dbReference type="ChEBI" id="CHEBI:30616"/>
    </ligand>
</feature>
<feature type="binding site" evidence="1">
    <location>
        <position position="73"/>
    </location>
    <ligand>
        <name>Mg(2+)</name>
        <dbReference type="ChEBI" id="CHEBI:18420"/>
    </ligand>
</feature>
<feature type="binding site" evidence="1">
    <location>
        <position position="141"/>
    </location>
    <ligand>
        <name>Mg(2+)</name>
        <dbReference type="ChEBI" id="CHEBI:18420"/>
    </ligand>
</feature>
<feature type="binding site" evidence="1">
    <location>
        <begin position="148"/>
        <end position="150"/>
    </location>
    <ligand>
        <name>CTP</name>
        <dbReference type="ChEBI" id="CHEBI:37563"/>
        <note>allosteric inhibitor</note>
    </ligand>
</feature>
<feature type="binding site" evidence="1">
    <location>
        <begin position="188"/>
        <end position="193"/>
    </location>
    <ligand>
        <name>CTP</name>
        <dbReference type="ChEBI" id="CHEBI:37563"/>
        <note>allosteric inhibitor</note>
    </ligand>
</feature>
<feature type="binding site" evidence="1">
    <location>
        <begin position="188"/>
        <end position="193"/>
    </location>
    <ligand>
        <name>UTP</name>
        <dbReference type="ChEBI" id="CHEBI:46398"/>
    </ligand>
</feature>
<feature type="binding site" evidence="1">
    <location>
        <position position="224"/>
    </location>
    <ligand>
        <name>CTP</name>
        <dbReference type="ChEBI" id="CHEBI:37563"/>
        <note>allosteric inhibitor</note>
    </ligand>
</feature>
<feature type="binding site" evidence="1">
    <location>
        <position position="224"/>
    </location>
    <ligand>
        <name>UTP</name>
        <dbReference type="ChEBI" id="CHEBI:46398"/>
    </ligand>
</feature>
<feature type="binding site" evidence="1">
    <location>
        <begin position="240"/>
        <end position="242"/>
    </location>
    <ligand>
        <name>ATP</name>
        <dbReference type="ChEBI" id="CHEBI:30616"/>
    </ligand>
</feature>
<feature type="binding site" evidence="1">
    <location>
        <position position="360"/>
    </location>
    <ligand>
        <name>L-glutamine</name>
        <dbReference type="ChEBI" id="CHEBI:58359"/>
    </ligand>
</feature>
<feature type="binding site" evidence="1">
    <location>
        <begin position="388"/>
        <end position="391"/>
    </location>
    <ligand>
        <name>L-glutamine</name>
        <dbReference type="ChEBI" id="CHEBI:58359"/>
    </ligand>
</feature>
<feature type="binding site" evidence="1">
    <location>
        <position position="411"/>
    </location>
    <ligand>
        <name>L-glutamine</name>
        <dbReference type="ChEBI" id="CHEBI:58359"/>
    </ligand>
</feature>
<feature type="binding site" evidence="1">
    <location>
        <position position="468"/>
    </location>
    <ligand>
        <name>L-glutamine</name>
        <dbReference type="ChEBI" id="CHEBI:58359"/>
    </ligand>
</feature>
<sequence length="540" mass="61023">MKIMKFIFITGGVISSLGKGITAASLGRLLKARGFKVNMIKIDPYLQIDAGTMSPYEHGEVFVTEDGGESDLDLGHYERFIDENLTKNNNITTGKIYWSVLTKERKGEYLGKTVQVIPHITNEIKDWIKNLGEGYDITIVEIGGTVGDIESLPFLEAIRQFKKDVGKENVLYIHVSLLPYIRAAGELKTKPTQHSVKELRSIGIQPDILICRTEMPISDKIREKLALFCDVDKEAVIEARDARTIYEVPLNLEKEGLGKLVTKKLNLPDREPDLDEWRKFVDRVINPLNEVTIGIVGKYVELKDAYLSITEALIHAGAKNDTKVNINWIHSERLESEEFEELLDRYREDNQLDGILVPGGFGDRGVEGKINAIKYARENDIPFLGICMGMQCAVIEFARNVCGLEGANSTEFDENTKYPVVDLLPEQKEIDAKGGTMRLGAYPAILMEGTLAYKLYGRKEVYERHRHRYEVNPEYHEILENHGLTISGKSPDGRLAEFIEISKNRYFIATQAHPEFKSRPNKPHPLFDGLVRASLGEKIK</sequence>
<name>PYRG_METJA</name>
<organism>
    <name type="scientific">Methanocaldococcus jannaschii (strain ATCC 43067 / DSM 2661 / JAL-1 / JCM 10045 / NBRC 100440)</name>
    <name type="common">Methanococcus jannaschii</name>
    <dbReference type="NCBI Taxonomy" id="243232"/>
    <lineage>
        <taxon>Archaea</taxon>
        <taxon>Methanobacteriati</taxon>
        <taxon>Methanobacteriota</taxon>
        <taxon>Methanomada group</taxon>
        <taxon>Methanococci</taxon>
        <taxon>Methanococcales</taxon>
        <taxon>Methanocaldococcaceae</taxon>
        <taxon>Methanocaldococcus</taxon>
    </lineage>
</organism>